<name>Y412_MYCGE</name>
<keyword id="KW-1003">Cell membrane</keyword>
<keyword id="KW-0449">Lipoprotein</keyword>
<keyword id="KW-0472">Membrane</keyword>
<keyword id="KW-0564">Palmitate</keyword>
<keyword id="KW-1185">Reference proteome</keyword>
<keyword id="KW-0732">Signal</keyword>
<gene>
    <name type="ordered locus">MG412</name>
</gene>
<sequence length="377" mass="42470">MLKFRNFFKLTLLTLASAFFLSGCANINLISAVGSSSVQPLLNKLSSYYVLNENNDNDKLVEISVQAGGSNAGIRAIINGFADIGNVSKNPKEYAKENEKKWRDKKLKTLTIGKDAIAVIYKAPQELKGKLLLTKDNINDLYDLFAGVKTINIDKFVKKDTKNMSNEKDYPLTSFPRTGGSFASGTAEAFLNFSALKSDKTLDSQTRDILKGIINYGPLAKPTSETNIEAFNTFVTNLQDPNLFGMIYLSLGFIQNNLQAIKNNGFEILPIKYENKEVLPSNQTVSQNEYKWVRPLNSIVSLSEENKNIDEIKTFFNWLFFNGKKDVIKNIYDEFGILQLTEDEKKKMFKTNDSSPMNLENFWVDDFAFSNPIFGAF</sequence>
<reference key="1">
    <citation type="journal article" date="1995" name="Science">
        <title>The minimal gene complement of Mycoplasma genitalium.</title>
        <authorList>
            <person name="Fraser C.M."/>
            <person name="Gocayne J.D."/>
            <person name="White O."/>
            <person name="Adams M.D."/>
            <person name="Clayton R.A."/>
            <person name="Fleischmann R.D."/>
            <person name="Bult C.J."/>
            <person name="Kerlavage A.R."/>
            <person name="Sutton G.G."/>
            <person name="Kelley J.M."/>
            <person name="Fritchman J.L."/>
            <person name="Weidman J.F."/>
            <person name="Small K.V."/>
            <person name="Sandusky M."/>
            <person name="Fuhrmann J.L."/>
            <person name="Nguyen D.T."/>
            <person name="Utterback T.R."/>
            <person name="Saudek D.M."/>
            <person name="Phillips C.A."/>
            <person name="Merrick J.M."/>
            <person name="Tomb J.-F."/>
            <person name="Dougherty B.A."/>
            <person name="Bott K.F."/>
            <person name="Hu P.-C."/>
            <person name="Lucier T.S."/>
            <person name="Peterson S.N."/>
            <person name="Smith H.O."/>
            <person name="Hutchison C.A. III"/>
            <person name="Venter J.C."/>
        </authorList>
    </citation>
    <scope>NUCLEOTIDE SEQUENCE [LARGE SCALE GENOMIC DNA]</scope>
    <source>
        <strain>ATCC 33530 / DSM 19775 / NCTC 10195 / G37</strain>
    </source>
</reference>
<reference key="2">
    <citation type="journal article" date="1993" name="J. Bacteriol.">
        <title>A survey of the Mycoplasma genitalium genome by using random sequencing.</title>
        <authorList>
            <person name="Peterson S.N."/>
            <person name="Hu P.-C."/>
            <person name="Bott K.F."/>
            <person name="Hutchison C.A. III"/>
        </authorList>
    </citation>
    <scope>NUCLEOTIDE SEQUENCE [GENOMIC DNA] OF 1-74 AND 189-225</scope>
    <source>
        <strain>ATCC 33530 / DSM 19775 / NCTC 10195 / G37</strain>
    </source>
</reference>
<evidence type="ECO:0000255" key="1">
    <source>
        <dbReference type="PROSITE-ProRule" id="PRU00303"/>
    </source>
</evidence>
<evidence type="ECO:0000305" key="2"/>
<comment type="subcellular location">
    <subcellularLocation>
        <location evidence="1">Cell membrane</location>
        <topology evidence="1">Lipid-anchor</topology>
    </subcellularLocation>
</comment>
<comment type="sequence caution" evidence="2">
    <conflict type="erroneous initiation">
        <sequence resource="EMBL-CDS" id="AAB01014"/>
    </conflict>
</comment>
<feature type="signal peptide" evidence="1">
    <location>
        <begin position="1"/>
        <end position="23"/>
    </location>
</feature>
<feature type="chain" id="PRO_0000014040" description="Uncharacterized lipoprotein MG412">
    <location>
        <begin position="24"/>
        <end position="377"/>
    </location>
</feature>
<feature type="lipid moiety-binding region" description="N-palmitoyl cysteine" evidence="1">
    <location>
        <position position="24"/>
    </location>
</feature>
<feature type="lipid moiety-binding region" description="S-diacylglycerol cysteine" evidence="1">
    <location>
        <position position="24"/>
    </location>
</feature>
<proteinExistence type="inferred from homology"/>
<dbReference type="EMBL" id="L43967">
    <property type="protein sequence ID" value="AAC71640.1"/>
    <property type="molecule type" value="Genomic_DNA"/>
</dbReference>
<dbReference type="EMBL" id="U01702">
    <property type="protein sequence ID" value="AAB01014.1"/>
    <property type="status" value="ALT_INIT"/>
    <property type="molecule type" value="Genomic_DNA"/>
</dbReference>
<dbReference type="EMBL" id="U02101">
    <property type="protein sequence ID" value="AAD12373.1"/>
    <property type="molecule type" value="Genomic_DNA"/>
</dbReference>
<dbReference type="PIR" id="F64245">
    <property type="entry name" value="F64245"/>
</dbReference>
<dbReference type="RefSeq" id="WP_010869472.1">
    <property type="nucleotide sequence ID" value="NC_000908.2"/>
</dbReference>
<dbReference type="SMR" id="P47652"/>
<dbReference type="STRING" id="243273.MG_412"/>
<dbReference type="GeneID" id="88282597"/>
<dbReference type="KEGG" id="mge:MG_412"/>
<dbReference type="eggNOG" id="COG0226">
    <property type="taxonomic scope" value="Bacteria"/>
</dbReference>
<dbReference type="HOGENOM" id="CLU_679389_0_0_14"/>
<dbReference type="InParanoid" id="P47652"/>
<dbReference type="OrthoDB" id="396325at2"/>
<dbReference type="BioCyc" id="MGEN243273:G1GJ2-509-MONOMER"/>
<dbReference type="Proteomes" id="UP000000807">
    <property type="component" value="Chromosome"/>
</dbReference>
<dbReference type="GO" id="GO:0005886">
    <property type="term" value="C:plasma membrane"/>
    <property type="evidence" value="ECO:0007669"/>
    <property type="project" value="UniProtKB-SubCell"/>
</dbReference>
<dbReference type="Gene3D" id="3.40.190.10">
    <property type="entry name" value="Periplasmic binding protein-like II"/>
    <property type="match status" value="2"/>
</dbReference>
<dbReference type="InterPro" id="IPR024370">
    <property type="entry name" value="PBP_domain"/>
</dbReference>
<dbReference type="InterPro" id="IPR050811">
    <property type="entry name" value="Phosphate_ABC_transporter"/>
</dbReference>
<dbReference type="PANTHER" id="PTHR30570">
    <property type="entry name" value="PERIPLASMIC PHOSPHATE BINDING COMPONENT OF PHOSPHATE ABC TRANSPORTER"/>
    <property type="match status" value="1"/>
</dbReference>
<dbReference type="PANTHER" id="PTHR30570:SF1">
    <property type="entry name" value="PHOSPHATE-BINDING PROTEIN PSTS"/>
    <property type="match status" value="1"/>
</dbReference>
<dbReference type="Pfam" id="PF12849">
    <property type="entry name" value="PBP_like_2"/>
    <property type="match status" value="1"/>
</dbReference>
<dbReference type="SUPFAM" id="SSF53850">
    <property type="entry name" value="Periplasmic binding protein-like II"/>
    <property type="match status" value="1"/>
</dbReference>
<dbReference type="PROSITE" id="PS51257">
    <property type="entry name" value="PROKAR_LIPOPROTEIN"/>
    <property type="match status" value="1"/>
</dbReference>
<protein>
    <recommendedName>
        <fullName>Uncharacterized lipoprotein MG412</fullName>
    </recommendedName>
</protein>
<accession>P47652</accession>
<accession>Q49510</accession>
<organism>
    <name type="scientific">Mycoplasma genitalium (strain ATCC 33530 / DSM 19775 / NCTC 10195 / G37)</name>
    <name type="common">Mycoplasmoides genitalium</name>
    <dbReference type="NCBI Taxonomy" id="243273"/>
    <lineage>
        <taxon>Bacteria</taxon>
        <taxon>Bacillati</taxon>
        <taxon>Mycoplasmatota</taxon>
        <taxon>Mycoplasmoidales</taxon>
        <taxon>Mycoplasmoidaceae</taxon>
        <taxon>Mycoplasmoides</taxon>
    </lineage>
</organism>